<organism>
    <name type="scientific">Rhizobium leguminosarum bv. trifolii (strain WSM2304)</name>
    <dbReference type="NCBI Taxonomy" id="395492"/>
    <lineage>
        <taxon>Bacteria</taxon>
        <taxon>Pseudomonadati</taxon>
        <taxon>Pseudomonadota</taxon>
        <taxon>Alphaproteobacteria</taxon>
        <taxon>Hyphomicrobiales</taxon>
        <taxon>Rhizobiaceae</taxon>
        <taxon>Rhizobium/Agrobacterium group</taxon>
        <taxon>Rhizobium</taxon>
    </lineage>
</organism>
<gene>
    <name evidence="1" type="primary">cobQ</name>
    <name type="ordered locus">Rleg2_2137</name>
</gene>
<accession>B5ZT17</accession>
<keyword id="KW-0169">Cobalamin biosynthesis</keyword>
<keyword id="KW-0315">Glutamine amidotransferase</keyword>
<keyword id="KW-1185">Reference proteome</keyword>
<evidence type="ECO:0000255" key="1">
    <source>
        <dbReference type="HAMAP-Rule" id="MF_00028"/>
    </source>
</evidence>
<feature type="chain" id="PRO_1000090242" description="Cobyric acid synthase">
    <location>
        <begin position="1"/>
        <end position="484"/>
    </location>
</feature>
<feature type="domain" description="GATase cobBQ-type" evidence="1">
    <location>
        <begin position="251"/>
        <end position="438"/>
    </location>
</feature>
<feature type="active site" description="Nucleophile" evidence="1">
    <location>
        <position position="333"/>
    </location>
</feature>
<feature type="active site" evidence="1">
    <location>
        <position position="430"/>
    </location>
</feature>
<sequence length="484" mass="51614">MARAIMLQGTGSDVGKTVLVAGLCRLAANRGLAVRPFKPQNMSNNAAVADDGGEIGRAQWLQSLAARAPSSVHMNPVLLKPQSENGSQIIVQGRVFGQSKGRDYQRLKPQLLGAVLESFEKVAAGADLVIVEGAGSPAEINLRAGDIANMGFATRAGVPVVLVGDIDRGGVIASLVGTHAILDDGDRAMIAGYIINKFRGDISLFDDGIRAIEGFTGWPCFGVVPWLPGAARLPAEDSVVLERLAKGRAGALKIAVPVLPRIANFDDLDPLRAEPDVELVFVRSGERLPADASLVILPGSKSTISDLADFRAEGWDRDLHMHVRRGGRVIGICGGYQMLGRTVRDRLGIEGGTLETPGLALLDVETEMAPEKTVRNSHARSTEYDVPLAGYQIHLGITHGPDCDRPSAIVDGVPDGALSADGRIVGTYLHGLFGSDAYRTRLLQSFGLSGERRNYRESVEQALDEIAGELERYLDPRWLAGLLG</sequence>
<protein>
    <recommendedName>
        <fullName evidence="1">Cobyric acid synthase</fullName>
    </recommendedName>
</protein>
<proteinExistence type="inferred from homology"/>
<reference key="1">
    <citation type="journal article" date="2010" name="Stand. Genomic Sci.">
        <title>Complete genome sequence of Rhizobium leguminosarum bv trifolii strain WSM2304, an effective microsymbiont of the South American clover Trifolium polymorphum.</title>
        <authorList>
            <person name="Reeve W."/>
            <person name="O'Hara G."/>
            <person name="Chain P."/>
            <person name="Ardley J."/>
            <person name="Brau L."/>
            <person name="Nandesena K."/>
            <person name="Tiwari R."/>
            <person name="Malfatti S."/>
            <person name="Kiss H."/>
            <person name="Lapidus A."/>
            <person name="Copeland A."/>
            <person name="Nolan M."/>
            <person name="Land M."/>
            <person name="Ivanova N."/>
            <person name="Mavromatis K."/>
            <person name="Markowitz V."/>
            <person name="Kyrpides N."/>
            <person name="Melino V."/>
            <person name="Denton M."/>
            <person name="Yates R."/>
            <person name="Howieson J."/>
        </authorList>
    </citation>
    <scope>NUCLEOTIDE SEQUENCE [LARGE SCALE GENOMIC DNA]</scope>
    <source>
        <strain>WSM2304</strain>
    </source>
</reference>
<comment type="function">
    <text evidence="1">Catalyzes amidations at positions B, D, E, and G on adenosylcobyrinic A,C-diamide. NH(2) groups are provided by glutamine, and one molecule of ATP is hydrogenolyzed for each amidation.</text>
</comment>
<comment type="pathway">
    <text evidence="1">Cofactor biosynthesis; adenosylcobalamin biosynthesis.</text>
</comment>
<comment type="similarity">
    <text evidence="1">Belongs to the CobB/CobQ family. CobQ subfamily.</text>
</comment>
<name>COBQ_RHILW</name>
<dbReference type="EMBL" id="CP001191">
    <property type="protein sequence ID" value="ACI55420.1"/>
    <property type="molecule type" value="Genomic_DNA"/>
</dbReference>
<dbReference type="RefSeq" id="WP_012557973.1">
    <property type="nucleotide sequence ID" value="NC_011369.1"/>
</dbReference>
<dbReference type="SMR" id="B5ZT17"/>
<dbReference type="STRING" id="395492.Rleg2_2137"/>
<dbReference type="KEGG" id="rlt:Rleg2_2137"/>
<dbReference type="eggNOG" id="COG1492">
    <property type="taxonomic scope" value="Bacteria"/>
</dbReference>
<dbReference type="HOGENOM" id="CLU_019250_2_0_5"/>
<dbReference type="UniPathway" id="UPA00148"/>
<dbReference type="Proteomes" id="UP000008330">
    <property type="component" value="Chromosome"/>
</dbReference>
<dbReference type="GO" id="GO:0015420">
    <property type="term" value="F:ABC-type vitamin B12 transporter activity"/>
    <property type="evidence" value="ECO:0007669"/>
    <property type="project" value="UniProtKB-UniRule"/>
</dbReference>
<dbReference type="GO" id="GO:0003824">
    <property type="term" value="F:catalytic activity"/>
    <property type="evidence" value="ECO:0007669"/>
    <property type="project" value="InterPro"/>
</dbReference>
<dbReference type="GO" id="GO:0009236">
    <property type="term" value="P:cobalamin biosynthetic process"/>
    <property type="evidence" value="ECO:0007669"/>
    <property type="project" value="UniProtKB-UniRule"/>
</dbReference>
<dbReference type="CDD" id="cd05389">
    <property type="entry name" value="CobQ_N"/>
    <property type="match status" value="1"/>
</dbReference>
<dbReference type="CDD" id="cd01750">
    <property type="entry name" value="GATase1_CobQ"/>
    <property type="match status" value="1"/>
</dbReference>
<dbReference type="Gene3D" id="3.40.50.880">
    <property type="match status" value="1"/>
</dbReference>
<dbReference type="Gene3D" id="3.40.50.300">
    <property type="entry name" value="P-loop containing nucleotide triphosphate hydrolases"/>
    <property type="match status" value="1"/>
</dbReference>
<dbReference type="HAMAP" id="MF_00028">
    <property type="entry name" value="CobQ"/>
    <property type="match status" value="1"/>
</dbReference>
<dbReference type="InterPro" id="IPR029062">
    <property type="entry name" value="Class_I_gatase-like"/>
</dbReference>
<dbReference type="InterPro" id="IPR002586">
    <property type="entry name" value="CobQ/CobB/MinD/ParA_Nub-bd_dom"/>
</dbReference>
<dbReference type="InterPro" id="IPR033949">
    <property type="entry name" value="CobQ_GATase1"/>
</dbReference>
<dbReference type="InterPro" id="IPR047045">
    <property type="entry name" value="CobQ_N"/>
</dbReference>
<dbReference type="InterPro" id="IPR004459">
    <property type="entry name" value="CobQ_synth"/>
</dbReference>
<dbReference type="InterPro" id="IPR011698">
    <property type="entry name" value="GATase_3"/>
</dbReference>
<dbReference type="InterPro" id="IPR027417">
    <property type="entry name" value="P-loop_NTPase"/>
</dbReference>
<dbReference type="NCBIfam" id="TIGR00313">
    <property type="entry name" value="cobQ"/>
    <property type="match status" value="1"/>
</dbReference>
<dbReference type="NCBIfam" id="NF001989">
    <property type="entry name" value="PRK00784.1"/>
    <property type="match status" value="1"/>
</dbReference>
<dbReference type="PANTHER" id="PTHR21343:SF1">
    <property type="entry name" value="COBYRIC ACID SYNTHASE"/>
    <property type="match status" value="1"/>
</dbReference>
<dbReference type="PANTHER" id="PTHR21343">
    <property type="entry name" value="DETHIOBIOTIN SYNTHETASE"/>
    <property type="match status" value="1"/>
</dbReference>
<dbReference type="Pfam" id="PF01656">
    <property type="entry name" value="CbiA"/>
    <property type="match status" value="1"/>
</dbReference>
<dbReference type="Pfam" id="PF07685">
    <property type="entry name" value="GATase_3"/>
    <property type="match status" value="1"/>
</dbReference>
<dbReference type="SUPFAM" id="SSF52317">
    <property type="entry name" value="Class I glutamine amidotransferase-like"/>
    <property type="match status" value="1"/>
</dbReference>
<dbReference type="SUPFAM" id="SSF52540">
    <property type="entry name" value="P-loop containing nucleoside triphosphate hydrolases"/>
    <property type="match status" value="1"/>
</dbReference>
<dbReference type="PROSITE" id="PS51274">
    <property type="entry name" value="GATASE_COBBQ"/>
    <property type="match status" value="1"/>
</dbReference>